<dbReference type="EC" id="3.6.4.13"/>
<dbReference type="EMBL" id="CP017624">
    <property type="protein sequence ID" value="AOW27461.1"/>
    <property type="molecule type" value="Genomic_DNA"/>
</dbReference>
<dbReference type="RefSeq" id="XP_712944.2">
    <property type="nucleotide sequence ID" value="XM_707851.2"/>
</dbReference>
<dbReference type="SMR" id="Q59TB2"/>
<dbReference type="FunCoup" id="Q59TB2">
    <property type="interactions" value="713"/>
</dbReference>
<dbReference type="STRING" id="237561.Q59TB2"/>
<dbReference type="EnsemblFungi" id="C2_04350C_A-T">
    <property type="protein sequence ID" value="C2_04350C_A-T-p1"/>
    <property type="gene ID" value="C2_04350C_A"/>
</dbReference>
<dbReference type="GeneID" id="3645451"/>
<dbReference type="KEGG" id="cal:CAALFM_C204350CA"/>
<dbReference type="CGD" id="CAL0000176369">
    <property type="gene designation" value="SUV3"/>
</dbReference>
<dbReference type="VEuPathDB" id="FungiDB:C2_04350C_A"/>
<dbReference type="eggNOG" id="KOG0953">
    <property type="taxonomic scope" value="Eukaryota"/>
</dbReference>
<dbReference type="HOGENOM" id="CLU_010647_2_2_1"/>
<dbReference type="InParanoid" id="Q59TB2"/>
<dbReference type="OrthoDB" id="6692397at2759"/>
<dbReference type="PRO" id="PR:Q59TB2"/>
<dbReference type="Proteomes" id="UP000000559">
    <property type="component" value="Chromosome 2"/>
</dbReference>
<dbReference type="GO" id="GO:0045025">
    <property type="term" value="C:mitochondrial degradosome"/>
    <property type="evidence" value="ECO:0000318"/>
    <property type="project" value="GO_Central"/>
</dbReference>
<dbReference type="GO" id="GO:0005759">
    <property type="term" value="C:mitochondrial matrix"/>
    <property type="evidence" value="ECO:0007669"/>
    <property type="project" value="UniProtKB-SubCell"/>
</dbReference>
<dbReference type="GO" id="GO:0005524">
    <property type="term" value="F:ATP binding"/>
    <property type="evidence" value="ECO:0007669"/>
    <property type="project" value="UniProtKB-KW"/>
</dbReference>
<dbReference type="GO" id="GO:0016887">
    <property type="term" value="F:ATP hydrolysis activity"/>
    <property type="evidence" value="ECO:0007669"/>
    <property type="project" value="RHEA"/>
</dbReference>
<dbReference type="GO" id="GO:0008859">
    <property type="term" value="F:exoribonuclease II activity"/>
    <property type="evidence" value="ECO:0007669"/>
    <property type="project" value="EnsemblFungi"/>
</dbReference>
<dbReference type="GO" id="GO:0003724">
    <property type="term" value="F:RNA helicase activity"/>
    <property type="evidence" value="ECO:0007669"/>
    <property type="project" value="UniProtKB-EC"/>
</dbReference>
<dbReference type="GO" id="GO:0009060">
    <property type="term" value="P:aerobic respiration"/>
    <property type="evidence" value="ECO:0000315"/>
    <property type="project" value="CGD"/>
</dbReference>
<dbReference type="GO" id="GO:0036187">
    <property type="term" value="P:cell growth mode switching, budding to filamentous"/>
    <property type="evidence" value="ECO:0000315"/>
    <property type="project" value="CGD"/>
</dbReference>
<dbReference type="GO" id="GO:0071467">
    <property type="term" value="P:cellular response to pH"/>
    <property type="evidence" value="ECO:0000315"/>
    <property type="project" value="CGD"/>
</dbReference>
<dbReference type="GO" id="GO:0001410">
    <property type="term" value="P:chlamydospore formation"/>
    <property type="evidence" value="ECO:0000315"/>
    <property type="project" value="CGD"/>
</dbReference>
<dbReference type="GO" id="GO:0030447">
    <property type="term" value="P:filamentous growth"/>
    <property type="evidence" value="ECO:0000315"/>
    <property type="project" value="CGD"/>
</dbReference>
<dbReference type="GO" id="GO:0044182">
    <property type="term" value="P:filamentous growth of a population of unicellular organisms"/>
    <property type="evidence" value="ECO:0000315"/>
    <property type="project" value="CGD"/>
</dbReference>
<dbReference type="GO" id="GO:0036180">
    <property type="term" value="P:filamentous growth of a population of unicellular organisms in response to biotic stimulus"/>
    <property type="evidence" value="ECO:0000315"/>
    <property type="project" value="CGD"/>
</dbReference>
<dbReference type="GO" id="GO:0036177">
    <property type="term" value="P:filamentous growth of a population of unicellular organisms in response to pH"/>
    <property type="evidence" value="ECO:0000315"/>
    <property type="project" value="CGD"/>
</dbReference>
<dbReference type="GO" id="GO:0000372">
    <property type="term" value="P:Group I intron splicing"/>
    <property type="evidence" value="ECO:0007669"/>
    <property type="project" value="EnsemblFungi"/>
</dbReference>
<dbReference type="GO" id="GO:0006264">
    <property type="term" value="P:mitochondrial DNA replication"/>
    <property type="evidence" value="ECO:0007669"/>
    <property type="project" value="EnsemblFungi"/>
</dbReference>
<dbReference type="GO" id="GO:0000965">
    <property type="term" value="P:mitochondrial RNA 3'-end processing"/>
    <property type="evidence" value="ECO:0000318"/>
    <property type="project" value="GO_Central"/>
</dbReference>
<dbReference type="GO" id="GO:0000957">
    <property type="term" value="P:mitochondrial RNA catabolic process"/>
    <property type="evidence" value="ECO:0007669"/>
    <property type="project" value="EnsemblFungi"/>
</dbReference>
<dbReference type="GO" id="GO:0006390">
    <property type="term" value="P:mitochondrial transcription"/>
    <property type="evidence" value="ECO:0000315"/>
    <property type="project" value="CGD"/>
</dbReference>
<dbReference type="GO" id="GO:0044011">
    <property type="term" value="P:single-species biofilm formation on inanimate substrate"/>
    <property type="evidence" value="ECO:0000315"/>
    <property type="project" value="CGD"/>
</dbReference>
<dbReference type="CDD" id="cd17913">
    <property type="entry name" value="DEXQc_Suv3"/>
    <property type="match status" value="1"/>
</dbReference>
<dbReference type="CDD" id="cd18805">
    <property type="entry name" value="SF2_C_suv3"/>
    <property type="match status" value="1"/>
</dbReference>
<dbReference type="FunFam" id="3.40.50.300:FF:000269">
    <property type="entry name" value="ATP-dependent RNA helicase SUPV3L1, mitochondrial"/>
    <property type="match status" value="1"/>
</dbReference>
<dbReference type="FunFam" id="3.40.50.300:FF:001549">
    <property type="entry name" value="SUV3p ATP-dependent RNA helicase"/>
    <property type="match status" value="1"/>
</dbReference>
<dbReference type="Gene3D" id="1.20.272.40">
    <property type="match status" value="1"/>
</dbReference>
<dbReference type="Gene3D" id="1.20.58.1080">
    <property type="match status" value="1"/>
</dbReference>
<dbReference type="Gene3D" id="3.40.50.300">
    <property type="entry name" value="P-loop containing nucleotide triphosphate hydrolases"/>
    <property type="match status" value="2"/>
</dbReference>
<dbReference type="InterPro" id="IPR055206">
    <property type="entry name" value="DEXQc_SUV3"/>
</dbReference>
<dbReference type="InterPro" id="IPR001650">
    <property type="entry name" value="Helicase_C-like"/>
</dbReference>
<dbReference type="InterPro" id="IPR027417">
    <property type="entry name" value="P-loop_NTPase"/>
</dbReference>
<dbReference type="InterPro" id="IPR050699">
    <property type="entry name" value="RNA-DNA_Helicase"/>
</dbReference>
<dbReference type="InterPro" id="IPR022192">
    <property type="entry name" value="SUV3_C"/>
</dbReference>
<dbReference type="InterPro" id="IPR044774">
    <property type="entry name" value="Suv3_DEXQc"/>
</dbReference>
<dbReference type="PANTHER" id="PTHR12131">
    <property type="entry name" value="ATP-DEPENDENT RNA AND DNA HELICASE"/>
    <property type="match status" value="1"/>
</dbReference>
<dbReference type="PANTHER" id="PTHR12131:SF1">
    <property type="entry name" value="ATP-DEPENDENT RNA HELICASE SUPV3L1, MITOCHONDRIAL-RELATED"/>
    <property type="match status" value="1"/>
</dbReference>
<dbReference type="Pfam" id="PF22527">
    <property type="entry name" value="DEXQc_Suv3"/>
    <property type="match status" value="1"/>
</dbReference>
<dbReference type="Pfam" id="PF00271">
    <property type="entry name" value="Helicase_C"/>
    <property type="match status" value="1"/>
</dbReference>
<dbReference type="Pfam" id="PF12513">
    <property type="entry name" value="SUV3_C"/>
    <property type="match status" value="1"/>
</dbReference>
<dbReference type="SMART" id="SM00490">
    <property type="entry name" value="HELICc"/>
    <property type="match status" value="1"/>
</dbReference>
<dbReference type="SUPFAM" id="SSF52540">
    <property type="entry name" value="P-loop containing nucleoside triphosphate hydrolases"/>
    <property type="match status" value="1"/>
</dbReference>
<dbReference type="PROSITE" id="PS51192">
    <property type="entry name" value="HELICASE_ATP_BIND_1"/>
    <property type="match status" value="1"/>
</dbReference>
<dbReference type="PROSITE" id="PS51194">
    <property type="entry name" value="HELICASE_CTER"/>
    <property type="match status" value="1"/>
</dbReference>
<reference key="1">
    <citation type="journal article" date="2004" name="Proc. Natl. Acad. Sci. U.S.A.">
        <title>The diploid genome sequence of Candida albicans.</title>
        <authorList>
            <person name="Jones T."/>
            <person name="Federspiel N.A."/>
            <person name="Chibana H."/>
            <person name="Dungan J."/>
            <person name="Kalman S."/>
            <person name="Magee B.B."/>
            <person name="Newport G."/>
            <person name="Thorstenson Y.R."/>
            <person name="Agabian N."/>
            <person name="Magee P.T."/>
            <person name="Davis R.W."/>
            <person name="Scherer S."/>
        </authorList>
    </citation>
    <scope>NUCLEOTIDE SEQUENCE [LARGE SCALE GENOMIC DNA]</scope>
    <source>
        <strain>SC5314 / ATCC MYA-2876</strain>
    </source>
</reference>
<reference key="2">
    <citation type="journal article" date="2007" name="Genome Biol.">
        <title>Assembly of the Candida albicans genome into sixteen supercontigs aligned on the eight chromosomes.</title>
        <authorList>
            <person name="van het Hoog M."/>
            <person name="Rast T.J."/>
            <person name="Martchenko M."/>
            <person name="Grindle S."/>
            <person name="Dignard D."/>
            <person name="Hogues H."/>
            <person name="Cuomo C."/>
            <person name="Berriman M."/>
            <person name="Scherer S."/>
            <person name="Magee B.B."/>
            <person name="Whiteway M."/>
            <person name="Chibana H."/>
            <person name="Nantel A."/>
            <person name="Magee P.T."/>
        </authorList>
    </citation>
    <scope>GENOME REANNOTATION</scope>
    <source>
        <strain>SC5314 / ATCC MYA-2876</strain>
    </source>
</reference>
<reference key="3">
    <citation type="journal article" date="2013" name="Genome Biol.">
        <title>Assembly of a phased diploid Candida albicans genome facilitates allele-specific measurements and provides a simple model for repeat and indel structure.</title>
        <authorList>
            <person name="Muzzey D."/>
            <person name="Schwartz K."/>
            <person name="Weissman J.S."/>
            <person name="Sherlock G."/>
        </authorList>
    </citation>
    <scope>NUCLEOTIDE SEQUENCE [LARGE SCALE GENOMIC DNA]</scope>
    <scope>GENOME REANNOTATION</scope>
    <source>
        <strain>SC5314 / ATCC MYA-2876</strain>
    </source>
</reference>
<reference key="4">
    <citation type="journal article" date="2003" name="Microbiology">
        <title>Genetic control of chlamydospore formation in Candida albicans.</title>
        <authorList>
            <person name="Nobile C.J."/>
            <person name="Bruno V.M."/>
            <person name="Richard M.L."/>
            <person name="Davis D.A."/>
            <person name="Mitchell A.P."/>
        </authorList>
    </citation>
    <scope>FUNCTION</scope>
</reference>
<reference key="5">
    <citation type="journal article" date="2005" name="Eukaryot. Cell">
        <title>Candida albicans biofilm-defective mutants.</title>
        <authorList>
            <person name="Richard M.L."/>
            <person name="Nobile C.J."/>
            <person name="Bruno V.M."/>
            <person name="Mitchell A.P."/>
        </authorList>
    </citation>
    <scope>FUNCTION</scope>
</reference>
<reference key="6">
    <citation type="journal article" date="2010" name="Microbes Infect.">
        <title>Role of filamentation in Galleria mellonella killing by Candida albicans.</title>
        <authorList>
            <person name="Fuchs B.B."/>
            <person name="Eby J."/>
            <person name="Nobile C.J."/>
            <person name="El Khoury J.B."/>
            <person name="Mitchell A.P."/>
            <person name="Mylonakis E."/>
        </authorList>
    </citation>
    <scope>DISRUPTION PHENOTYPE</scope>
    <scope>FUNCTION</scope>
</reference>
<organism>
    <name type="scientific">Candida albicans (strain SC5314 / ATCC MYA-2876)</name>
    <name type="common">Yeast</name>
    <dbReference type="NCBI Taxonomy" id="237561"/>
    <lineage>
        <taxon>Eukaryota</taxon>
        <taxon>Fungi</taxon>
        <taxon>Dikarya</taxon>
        <taxon>Ascomycota</taxon>
        <taxon>Saccharomycotina</taxon>
        <taxon>Pichiomycetes</taxon>
        <taxon>Debaryomycetaceae</taxon>
        <taxon>Candida/Lodderomyces clade</taxon>
        <taxon>Candida</taxon>
    </lineage>
</organism>
<name>SUV3_CANAL</name>
<keyword id="KW-0067">ATP-binding</keyword>
<keyword id="KW-0347">Helicase</keyword>
<keyword id="KW-0378">Hydrolase</keyword>
<keyword id="KW-0496">Mitochondrion</keyword>
<keyword id="KW-0547">Nucleotide-binding</keyword>
<keyword id="KW-1185">Reference proteome</keyword>
<keyword id="KW-0809">Transit peptide</keyword>
<keyword id="KW-0843">Virulence</keyword>
<sequence length="720" mass="81824">MLLCQKPTYRLLRYSVKRYVASLYSLRGVSTRVNLIHRTYATTVAKDNIDHNDSSPVFNNNEVRFENINASIHPILLDLKNKLIKGKFDSPYTILNDQPSDVKTEIFQSFEQQLSKALSSKSTPENKITLVDYLNPTLDNISSLLHLISNNTYPNNFLEFSNLSSNNDLIMQLFTQLLHKIFLQYRIENASFEKPKVDFSNPAEWFPEARKMKRKIIMHVGPTNSGKTYNSLIKLSKSKTGYYAGPLRLLAREIYEKFNSQGIGCNLITGEEVVPSIDKYGKVSGIASGTIEMIPLHKKMDLCVIDEIQMIADPLRGSVWTNAVLGVLAHEIHLCGEESAVPFIQKMVEITGDELEIKKFNRLGKLTVEKSNTSLQQLKKGDCLVVFSKKKILKFKCDIERNTRLKVGVIYGALPPEIRSQEASKFNNGEYDVLVASDAIGMGLNLKINRIVFSGVNKFNGSTVEKLSVSQVKQIAGRAGRFSAQHGSKEGFVTALHRSSLVYIDQCLKTPVSEISKACIWPTSNIWRQYMANDPHKSSLSSVYENFLTNVLKFQSDNFFISELDQKVQLLNLVAKNRLLSTMIIDDQLTISETPINFRTSVNPKLLKNTVIKFYETIVKRDCKSILDFDFLDLELLSQNSFVGTDVMVPLQKVDKLEDMHRLVLLFLWLSQRFPTLFIDKDSAMEVKALVEKRINQELVNVERANSFFSDRSNGYEPRR</sequence>
<accession>Q59TB2</accession>
<accession>A0A1D8PH29</accession>
<evidence type="ECO:0000250" key="1"/>
<evidence type="ECO:0000255" key="2"/>
<evidence type="ECO:0000255" key="3">
    <source>
        <dbReference type="PROSITE-ProRule" id="PRU00541"/>
    </source>
</evidence>
<evidence type="ECO:0000255" key="4">
    <source>
        <dbReference type="PROSITE-ProRule" id="PRU00542"/>
    </source>
</evidence>
<evidence type="ECO:0000269" key="5">
    <source>
    </source>
</evidence>
<evidence type="ECO:0000269" key="6">
    <source>
    </source>
</evidence>
<evidence type="ECO:0000269" key="7">
    <source>
    </source>
</evidence>
<feature type="transit peptide" description="Mitochondrion" evidence="2">
    <location>
        <begin position="1"/>
        <end position="40"/>
    </location>
</feature>
<feature type="chain" id="PRO_0000422108" description="ATP-dependent RNA helicase SUV3, mitochondrial">
    <location>
        <begin position="41"/>
        <end position="720"/>
    </location>
</feature>
<feature type="domain" description="Helicase ATP-binding" evidence="3">
    <location>
        <begin position="208"/>
        <end position="349"/>
    </location>
</feature>
<feature type="domain" description="Helicase C-terminal" evidence="4">
    <location>
        <begin position="359"/>
        <end position="523"/>
    </location>
</feature>
<feature type="binding site" evidence="3">
    <location>
        <begin position="221"/>
        <end position="228"/>
    </location>
    <ligand>
        <name>ATP</name>
        <dbReference type="ChEBI" id="CHEBI:30616"/>
    </ligand>
</feature>
<comment type="function">
    <text evidence="1 5 6 7">Required for intron-independent turnover and processing of mitochondrial RNA. It is a key control element in nuclear-mitochondrial interactions (By similarity). Required for embedded hyphal growth, for wild-type respiratory growth, and biofilm development. Required for chlamydospore formation, distinctive morphological feature of the fungal pathogen C.albicans that can be induced to form in oxygen-limited environments and has been reported in clinical specimens. Plays am important role in virulence.</text>
</comment>
<comment type="catalytic activity">
    <reaction>
        <text>ATP + H2O = ADP + phosphate + H(+)</text>
        <dbReference type="Rhea" id="RHEA:13065"/>
        <dbReference type="ChEBI" id="CHEBI:15377"/>
        <dbReference type="ChEBI" id="CHEBI:15378"/>
        <dbReference type="ChEBI" id="CHEBI:30616"/>
        <dbReference type="ChEBI" id="CHEBI:43474"/>
        <dbReference type="ChEBI" id="CHEBI:456216"/>
        <dbReference type="EC" id="3.6.4.13"/>
    </reaction>
</comment>
<comment type="subcellular location">
    <subcellularLocation>
        <location evidence="1">Mitochondrion matrix</location>
    </subcellularLocation>
</comment>
<comment type="disruption phenotype">
    <text evidence="7">Leads to completely attenuated virulence in a mouse keratitis model.</text>
</comment>
<protein>
    <recommendedName>
        <fullName>ATP-dependent RNA helicase SUV3, mitochondrial</fullName>
        <ecNumber>3.6.4.13</ecNumber>
    </recommendedName>
</protein>
<gene>
    <name type="primary">SUV3</name>
    <name type="ordered locus">CAALFM_C204350CA</name>
    <name type="ORF">CaO19.11994</name>
    <name type="ORF">CaO19.4519</name>
</gene>
<proteinExistence type="inferred from homology"/>